<keyword id="KW-0002">3D-structure</keyword>
<keyword id="KW-0025">Alternative splicing</keyword>
<keyword id="KW-1015">Disulfide bond</keyword>
<keyword id="KW-0325">Glycoprotein</keyword>
<keyword id="KW-0945">Host-virus interaction</keyword>
<keyword id="KW-0472">Membrane</keyword>
<keyword id="KW-0675">Receptor</keyword>
<keyword id="KW-1185">Reference proteome</keyword>
<keyword id="KW-0732">Signal</keyword>
<keyword id="KW-0812">Transmembrane</keyword>
<keyword id="KW-1133">Transmembrane helix</keyword>
<accession>P98162</accession>
<evidence type="ECO:0000255" key="1"/>
<evidence type="ECO:0000255" key="2">
    <source>
        <dbReference type="PROSITE-ProRule" id="PRU00124"/>
    </source>
</evidence>
<evidence type="ECO:0000269" key="3">
    <source>
    </source>
</evidence>
<evidence type="ECO:0000269" key="4">
    <source>
    </source>
</evidence>
<evidence type="ECO:0000303" key="5">
    <source>
    </source>
</evidence>
<evidence type="ECO:0000305" key="6"/>
<evidence type="ECO:0007829" key="7">
    <source>
        <dbReference type="PDB" id="1JRF"/>
    </source>
</evidence>
<evidence type="ECO:0007829" key="8">
    <source>
        <dbReference type="PDB" id="1K7B"/>
    </source>
</evidence>
<dbReference type="EMBL" id="L22752">
    <property type="status" value="NOT_ANNOTATED_CDS"/>
    <property type="molecule type" value="mRNA"/>
</dbReference>
<dbReference type="EMBL" id="L22753">
    <property type="status" value="NOT_ANNOTATED_CDS"/>
    <property type="molecule type" value="mRNA"/>
</dbReference>
<dbReference type="PIR" id="A48837">
    <property type="entry name" value="A48837"/>
</dbReference>
<dbReference type="PIR" id="B48837">
    <property type="entry name" value="B48837"/>
</dbReference>
<dbReference type="PDB" id="1JRF">
    <property type="method" value="NMR"/>
    <property type="chains" value="A=28-72"/>
</dbReference>
<dbReference type="PDB" id="1K7B">
    <property type="method" value="NMR"/>
    <property type="chains" value="A=30-70"/>
</dbReference>
<dbReference type="PDBsum" id="1JRF"/>
<dbReference type="PDBsum" id="1K7B"/>
<dbReference type="SMR" id="P98162"/>
<dbReference type="EvolutionaryTrace" id="P98162"/>
<dbReference type="Proteomes" id="UP000694412">
    <property type="component" value="Unplaced"/>
</dbReference>
<dbReference type="GO" id="GO:0016020">
    <property type="term" value="C:membrane"/>
    <property type="evidence" value="ECO:0007669"/>
    <property type="project" value="UniProtKB-SubCell"/>
</dbReference>
<dbReference type="CDD" id="cd00112">
    <property type="entry name" value="LDLa"/>
    <property type="match status" value="1"/>
</dbReference>
<dbReference type="Gene3D" id="4.10.400.10">
    <property type="entry name" value="Low-density Lipoprotein Receptor"/>
    <property type="match status" value="1"/>
</dbReference>
<dbReference type="InterPro" id="IPR036055">
    <property type="entry name" value="LDL_receptor-like_sf"/>
</dbReference>
<dbReference type="InterPro" id="IPR002172">
    <property type="entry name" value="LDrepeatLR_classA_rpt"/>
</dbReference>
<dbReference type="Pfam" id="PF00057">
    <property type="entry name" value="Ldl_recept_a"/>
    <property type="match status" value="1"/>
</dbReference>
<dbReference type="SMART" id="SM00192">
    <property type="entry name" value="LDLa"/>
    <property type="match status" value="1"/>
</dbReference>
<dbReference type="SUPFAM" id="SSF57424">
    <property type="entry name" value="LDL receptor-like module"/>
    <property type="match status" value="1"/>
</dbReference>
<dbReference type="PROSITE" id="PS50068">
    <property type="entry name" value="LDLRA_2"/>
    <property type="match status" value="1"/>
</dbReference>
<organism>
    <name type="scientific">Coturnix japonica</name>
    <name type="common">Japanese quail</name>
    <name type="synonym">Coturnix coturnix japonica</name>
    <dbReference type="NCBI Taxonomy" id="93934"/>
    <lineage>
        <taxon>Eukaryota</taxon>
        <taxon>Metazoa</taxon>
        <taxon>Chordata</taxon>
        <taxon>Craniata</taxon>
        <taxon>Vertebrata</taxon>
        <taxon>Euteleostomi</taxon>
        <taxon>Archelosauria</taxon>
        <taxon>Archosauria</taxon>
        <taxon>Dinosauria</taxon>
        <taxon>Saurischia</taxon>
        <taxon>Theropoda</taxon>
        <taxon>Coelurosauria</taxon>
        <taxon>Aves</taxon>
        <taxon>Neognathae</taxon>
        <taxon>Galloanserae</taxon>
        <taxon>Galliformes</taxon>
        <taxon>Phasianidae</taxon>
        <taxon>Perdicinae</taxon>
        <taxon>Coturnix</taxon>
    </lineage>
</organism>
<reference key="1">
    <citation type="journal article" date="1993" name="Cell">
        <title>A receptor for subgroup A Rous sarcoma virus is related to the low density lipoprotein receptor.</title>
        <authorList>
            <person name="Bates P."/>
            <person name="Young J.A.T."/>
            <person name="Varmus H.E."/>
        </authorList>
    </citation>
    <scope>NUCLEOTIDE SEQUENCE [MRNA] (ISOFORMS PG800 AND PG950)</scope>
</reference>
<reference key="2">
    <citation type="journal article" date="2005" name="J. Virol.">
        <title>Receptor-induced conformational changes in the SU subunit of the avian sarcoma/leukosis virus A envelope protein: implications for fusion activation.</title>
        <authorList>
            <person name="Delos S.E."/>
            <person name="Godby J.A."/>
            <person name="White J.M."/>
        </authorList>
    </citation>
    <scope>INTERACTION WITH ROUS SARCOMA VIRUS ENVELOPE PROTEIN (ISOFORM PG950) (MICROBIAL INFECTION)</scope>
</reference>
<reference key="3">
    <citation type="journal article" date="2011" name="Retrovirology">
        <title>Binding of more than one Tva800 molecule is required for ASLV-A entry.</title>
        <authorList>
            <person name="Gray E.R."/>
            <person name="Illingworth C.J."/>
            <person name="Coffin J.M."/>
            <person name="Stoye J.P."/>
        </authorList>
    </citation>
    <scope>INTERACTION WITH ROUS SARCOMA VIRUS ENVELOPE PROTEIN (ISOFORM PG800) (MICROBIAL INFECTION)</scope>
</reference>
<reference key="4">
    <citation type="journal article" date="2001" name="FEBS Lett.">
        <title>The solution structure of the viral binding domain of Tva, the cellular receptor for subgroup A avian leukosis and sarcoma virus.</title>
        <authorList>
            <person name="Tonelli M."/>
            <person name="Peters R.J."/>
            <person name="James T.L."/>
            <person name="Agard D.A."/>
        </authorList>
    </citation>
    <scope>STRUCTURE BY NMR OF 30-70</scope>
    <scope>DISULFIDE BONDS</scope>
</reference>
<reference key="5">
    <citation type="journal article" date="2002" name="J. Virol.">
        <title>Solution structure of the viral receptor domain of Tva and its implications in viral entry.</title>
        <authorList>
            <person name="Wang Q.-Y."/>
            <person name="Huang W."/>
            <person name="Dolmer K."/>
            <person name="Gettins P.G."/>
            <person name="Rong L."/>
        </authorList>
    </citation>
    <scope>STRUCTURE BY NMR OF 28-72</scope>
    <scope>DISULFIDE BONDS</scope>
</reference>
<name>RSVR_COTJA</name>
<comment type="function">
    <text>Responsible for susceptibility to the retrovirus subgroup A Rous sarcoma virus.</text>
</comment>
<comment type="subunit">
    <molecule>Isoform pg800</molecule>
    <text evidence="4">(Microbial infection) Interacts with Rous sarcoma virus envelope protein; this interaction allows the viral attachment.</text>
</comment>
<comment type="subunit">
    <molecule>Isoform pg950</molecule>
    <text evidence="3">(Microbial infection) Interacts with Rous sarcoma virus envelope protein; this interaction allows the viral attachment.</text>
</comment>
<comment type="subcellular location">
    <subcellularLocation>
        <location evidence="6">Membrane</location>
        <topology evidence="6">Single-pass type I membrane protein</topology>
    </subcellularLocation>
</comment>
<comment type="alternative products">
    <event type="alternative splicing"/>
    <isoform>
        <id>P98162-1</id>
        <name>pg950</name>
        <name>Tva950</name>
        <sequence type="displayed"/>
    </isoform>
    <isoform>
        <id>P98162-2</id>
        <name>pg800</name>
        <name>Tva800</name>
        <sequence type="described" ref="VSP_004378 VSP_004379"/>
    </isoform>
</comment>
<feature type="signal peptide" evidence="1">
    <location>
        <begin position="1"/>
        <end position="19"/>
    </location>
</feature>
<feature type="chain" id="PRO_0000022252" description="Subgroup A Rous sarcoma virus receptor pg950">
    <location>
        <begin position="20"/>
        <end position="157"/>
    </location>
</feature>
<feature type="topological domain" description="Extracellular" evidence="1">
    <location>
        <begin position="20"/>
        <end position="102"/>
    </location>
</feature>
<feature type="transmembrane region" description="Helical" evidence="1">
    <location>
        <begin position="103"/>
        <end position="125"/>
    </location>
</feature>
<feature type="topological domain" description="Cytoplasmic" evidence="1">
    <location>
        <begin position="126"/>
        <end position="157"/>
    </location>
</feature>
<feature type="domain" description="LDL-receptor class A" evidence="2">
    <location>
        <begin position="28"/>
        <end position="71"/>
    </location>
</feature>
<feature type="glycosylation site" description="N-linked (GlcNAc...) asparagine" evidence="1">
    <location>
        <position position="20"/>
    </location>
</feature>
<feature type="glycosylation site" description="N-linked (GlcNAc...) asparagine" evidence="1">
    <location>
        <position position="24"/>
    </location>
</feature>
<feature type="glycosylation site" description="N-linked (GlcNAc...) asparagine" evidence="1">
    <location>
        <position position="81"/>
    </location>
</feature>
<feature type="disulfide bond">
    <location>
        <begin position="30"/>
        <end position="47"/>
    </location>
</feature>
<feature type="disulfide bond">
    <location>
        <begin position="37"/>
        <end position="60"/>
    </location>
</feature>
<feature type="disulfide bond">
    <location>
        <begin position="54"/>
        <end position="69"/>
    </location>
</feature>
<feature type="splice variant" id="VSP_004378" description="In isoform pg800." evidence="5">
    <original>VLLCCLVAVGG</original>
    <variation>GIFCCELVRWD</variation>
    <location>
        <begin position="110"/>
        <end position="120"/>
    </location>
</feature>
<feature type="splice variant" id="VSP_004379" description="In isoform pg800." evidence="5">
    <location>
        <begin position="121"/>
        <end position="157"/>
    </location>
</feature>
<feature type="strand" evidence="7">
    <location>
        <begin position="37"/>
        <end position="39"/>
    </location>
</feature>
<feature type="turn" evidence="7">
    <location>
        <begin position="45"/>
        <end position="47"/>
    </location>
</feature>
<feature type="helix" evidence="7">
    <location>
        <begin position="49"/>
        <end position="52"/>
    </location>
</feature>
<feature type="strand" evidence="7">
    <location>
        <begin position="53"/>
        <end position="57"/>
    </location>
</feature>
<feature type="strand" evidence="7">
    <location>
        <begin position="60"/>
        <end position="63"/>
    </location>
</feature>
<feature type="turn" evidence="8">
    <location>
        <begin position="64"/>
        <end position="66"/>
    </location>
</feature>
<feature type="helix" evidence="7">
    <location>
        <begin position="67"/>
        <end position="70"/>
    </location>
</feature>
<proteinExistence type="evidence at protein level"/>
<sequence length="157" mass="16355">MARLLPALLLLLLPGNVTGNGSGNGSLSRCPPGQFRCSEPPGAHGECYPQDWLCDGHPDCDDGRDEWGCGTSATPAVPTDNGTEAPTVPAPGRALPARNHGRMWMLITAVLLCCLVAVGGIAAWGKSKAKSRSDIFSLASASKELLVPDKSQADLFS</sequence>
<protein>
    <recommendedName>
        <fullName>Subgroup A Rous sarcoma virus receptor pg950</fullName>
    </recommendedName>
    <alternativeName>
        <fullName>Low density lipoprotein receptor-related protein</fullName>
    </alternativeName>
    <alternativeName>
        <fullName>Tva</fullName>
    </alternativeName>
</protein>